<reference key="1">
    <citation type="journal article" date="2003" name="J. Hum. Genet.">
        <title>Mutations in the gene encoding KIAA1199 protein, an inner-ear protein expressed in Deiters' cells and the fibrocytes, as the cause of nonsyndromic hearing loss.</title>
        <authorList>
            <person name="Abe S."/>
            <person name="Usami S."/>
            <person name="Nakamura Y."/>
        </authorList>
    </citation>
    <scope>NUCLEOTIDE SEQUENCE [MRNA]</scope>
    <scope>VARIANTS CYS-187; HIS-187 AND TYR-783</scope>
    <scope>VARIANTS ARG-783; ILE-1109 AND ALA-1169</scope>
</reference>
<reference key="2">
    <citation type="journal article" date="2006" name="Cancer Lett.">
        <title>Upregulation of the KIAA1199 gene is associated with cellular mortality.</title>
        <authorList>
            <person name="Michishita E."/>
            <person name="Garces G."/>
            <person name="Barrett J.C."/>
            <person name="Horikawa I."/>
        </authorList>
    </citation>
    <scope>NUCLEOTIDE SEQUENCE [MRNA]</scope>
    <scope>SUBCELLULAR LOCATION</scope>
    <scope>TISSUE SPECIFICITY</scope>
</reference>
<reference key="3">
    <citation type="submission" date="2005-09" db="EMBL/GenBank/DDBJ databases">
        <authorList>
            <person name="Mural R.J."/>
            <person name="Istrail S."/>
            <person name="Sutton G.G."/>
            <person name="Florea L."/>
            <person name="Halpern A.L."/>
            <person name="Mobarry C.M."/>
            <person name="Lippert R."/>
            <person name="Walenz B."/>
            <person name="Shatkay H."/>
            <person name="Dew I."/>
            <person name="Miller J.R."/>
            <person name="Flanigan M.J."/>
            <person name="Edwards N.J."/>
            <person name="Bolanos R."/>
            <person name="Fasulo D."/>
            <person name="Halldorsson B.V."/>
            <person name="Hannenhalli S."/>
            <person name="Turner R."/>
            <person name="Yooseph S."/>
            <person name="Lu F."/>
            <person name="Nusskern D.R."/>
            <person name="Shue B.C."/>
            <person name="Zheng X.H."/>
            <person name="Zhong F."/>
            <person name="Delcher A.L."/>
            <person name="Huson D.H."/>
            <person name="Kravitz S.A."/>
            <person name="Mouchard L."/>
            <person name="Reinert K."/>
            <person name="Remington K.A."/>
            <person name="Clark A.G."/>
            <person name="Waterman M.S."/>
            <person name="Eichler E.E."/>
            <person name="Adams M.D."/>
            <person name="Hunkapiller M.W."/>
            <person name="Myers E.W."/>
            <person name="Venter J.C."/>
        </authorList>
    </citation>
    <scope>NUCLEOTIDE SEQUENCE [LARGE SCALE GENOMIC DNA]</scope>
</reference>
<reference key="4">
    <citation type="journal article" date="2004" name="Genome Res.">
        <title>The status, quality, and expansion of the NIH full-length cDNA project: the Mammalian Gene Collection (MGC).</title>
        <authorList>
            <consortium name="The MGC Project Team"/>
        </authorList>
    </citation>
    <scope>NUCLEOTIDE SEQUENCE [LARGE SCALE MRNA] (ISOFORM 2)</scope>
    <source>
        <tissue>Skin</tissue>
    </source>
</reference>
<reference key="5">
    <citation type="journal article" date="1999" name="DNA Res.">
        <title>Prediction of the coding sequences of unidentified human genes. XV. The complete sequences of 100 new cDNA clones from brain which code for large proteins in vitro.</title>
        <authorList>
            <person name="Nagase T."/>
            <person name="Ishikawa K."/>
            <person name="Kikuno R."/>
            <person name="Hirosawa M."/>
            <person name="Nomura N."/>
            <person name="Ohara O."/>
        </authorList>
    </citation>
    <scope>NUCLEOTIDE SEQUENCE [LARGE SCALE MRNA] OF 349-1361 (ISOFORM 1)</scope>
    <scope>TISSUE SPECIFICITY</scope>
    <source>
        <tissue>Brain</tissue>
    </source>
</reference>
<reference key="6">
    <citation type="submission" date="2000-06" db="EMBL/GenBank/DDBJ databases">
        <authorList>
            <consortium name="The European IMAGE consortium"/>
        </authorList>
    </citation>
    <scope>NUCLEOTIDE SEQUENCE [LARGE SCALE MRNA] OF 558-1361</scope>
</reference>
<reference key="7">
    <citation type="journal article" date="2001" name="Genomics">
        <title>Identification of mesoderm development (mesd) candidate genes by comparative mapping and genome sequence analysis.</title>
        <authorList>
            <person name="Wines M.E."/>
            <person name="Lee L."/>
            <person name="Katari M.S."/>
            <person name="Zhang L."/>
            <person name="DeRossi C."/>
            <person name="Shi Y."/>
            <person name="Perkins S."/>
            <person name="Feldman M."/>
            <person name="McCombie W.R."/>
            <person name="Holdener B.C."/>
        </authorList>
    </citation>
    <scope>NUCLEOTIDE SEQUENCE [MRNA] OF 862-1361</scope>
</reference>
<reference key="8">
    <citation type="journal article" date="2003" name="Am. J. Hum. Genet.">
        <title>Identification of CRYM as a candidate responsible for nonsyndromic deafness, through cDNA microarray analysis of human cochlear and vestibular tissues.</title>
        <authorList>
            <person name="Abe S."/>
            <person name="Katagiri T."/>
            <person name="Saito-Hisaminato A."/>
            <person name="Usami S."/>
            <person name="Inoue Y."/>
            <person name="Tsunoda T."/>
            <person name="Nakamura Y."/>
        </authorList>
    </citation>
    <scope>TISSUE SPECIFICITY</scope>
</reference>
<reference key="9">
    <citation type="journal article" date="2009" name="Ann. Surg. Oncol.">
        <title>Clinicopathologic significance of KIAA1199 overexpression in human gastric cancer.</title>
        <authorList>
            <person name="Matsuzaki S."/>
            <person name="Tanaka F."/>
            <person name="Mimori K."/>
            <person name="Tahara K."/>
            <person name="Inoue H."/>
            <person name="Mori M."/>
        </authorList>
    </citation>
    <scope>SUBCELLULAR LOCATION</scope>
    <scope>TISSUE SPECIFICITY</scope>
</reference>
<reference key="10">
    <citation type="journal article" date="2011" name="Br. J. Cancer">
        <title>Repression of KIAA1199 attenuates Wnt-signalling and decreases the proliferation of colon cancer cells.</title>
        <authorList>
            <person name="Birkenkamp-Demtroder K."/>
            <person name="Maghnouj A."/>
            <person name="Mansilla F."/>
            <person name="Thorsen K."/>
            <person name="Andersen C.L."/>
            <person name="Oster B."/>
            <person name="Hahn S."/>
            <person name="Orntoft T.F."/>
        </authorList>
    </citation>
    <scope>PROBABLE FUNCTION</scope>
    <scope>SUBCELLULAR LOCATION</scope>
    <scope>TISSUE SPECIFICITY</scope>
</reference>
<reference key="11">
    <citation type="journal article" date="2012" name="PLoS ONE">
        <title>Transcriptional and epigenetic regulation of KIAA1199 gene expression in human breast cancer.</title>
        <authorList>
            <person name="Kuscu C."/>
            <person name="Evensen N."/>
            <person name="Kim D."/>
            <person name="Hu Y.J."/>
            <person name="Zucker S."/>
            <person name="Cao J."/>
        </authorList>
    </citation>
    <scope>TISSUE SPECIFICITY</scope>
    <scope>INDUCTION</scope>
</reference>
<reference key="12">
    <citation type="journal article" date="2013" name="J. Natl. Cancer Inst.">
        <title>Unraveling the role of KIAA1199, a novel endoplasmic reticulum protein, in cancer cell migration.</title>
        <authorList>
            <person name="Evensen N.A."/>
            <person name="Kuscu C."/>
            <person name="Nguyen H.L."/>
            <person name="Zarrabi K."/>
            <person name="Dufour A."/>
            <person name="Kadam P."/>
            <person name="Hu Y.J."/>
            <person name="Pulkoski-Gross A."/>
            <person name="Bahou W.F."/>
            <person name="Zucker S."/>
            <person name="Cao J."/>
        </authorList>
    </citation>
    <scope>FUNCTION IN CANCER</scope>
    <scope>INTERACTION WITH HSPA5</scope>
    <scope>SUBCELLULAR LOCATION</scope>
    <scope>TISSUE SPECIFICITY</scope>
</reference>
<reference key="13">
    <citation type="journal article" date="2013" name="PLoS ONE">
        <title>Early insights into the function of KIAA1199, a markedly overexpressed protein in human colorectal tumors.</title>
        <authorList>
            <person name="Tiwari A."/>
            <person name="Schneider M."/>
            <person name="Fiorino A."/>
            <person name="Haider R."/>
            <person name="Okoniewski M.J."/>
            <person name="Roschitzki B."/>
            <person name="Uzozie A."/>
            <person name="Menigatti M."/>
            <person name="Jiricny J."/>
            <person name="Marra G."/>
        </authorList>
    </citation>
    <scope>INTERACTION WITH EPHA2 AND ITPR3</scope>
    <scope>GLYCOSYLATION</scope>
    <scope>SUBCELLULAR LOCATION</scope>
    <scope>TISSUE SPECIFICITY</scope>
</reference>
<reference key="14">
    <citation type="journal article" date="2013" name="Proc. Natl. Acad. Sci. U.S.A.">
        <title>KIAA1199, a deafness gene of unknown function, is a new hyaluronan binding protein involved in hyaluronan depolymerization.</title>
        <authorList>
            <person name="Yoshida H."/>
            <person name="Nagaoka A."/>
            <person name="Kusaka-Kikushima A."/>
            <person name="Tobiishi M."/>
            <person name="Kawabata K."/>
            <person name="Sayo T."/>
            <person name="Sakai S."/>
            <person name="Sugiyama Y."/>
            <person name="Enomoto H."/>
            <person name="Okada Y."/>
            <person name="Inoue S."/>
        </authorList>
    </citation>
    <scope>FUNCTION IN HYALURONIC ACID DEGRADATION</scope>
    <scope>CATALYTIC ACTIVITY</scope>
    <scope>ACTIVITY REGULATION</scope>
    <scope>HYALURONIC ACID-BINDING</scope>
    <scope>INTERACTION WITH CLATHRIN</scope>
    <scope>SUBCELLULAR LOCATION</scope>
    <scope>INDUCTION</scope>
    <scope>CHARACTERIZATION OF VARIANTS CYS-187; HIS-187; ARG-783 AND ILE-1109</scope>
</reference>
<reference key="15">
    <citation type="journal article" date="2014" name="FEBS Lett.">
        <title>N-Terminal signal sequence is required for cellular trafficking and hyaluronan-depolymerization of KIAA1199.</title>
        <authorList>
            <person name="Yoshida H."/>
            <person name="Nagaoka A."/>
            <person name="Nakamura S."/>
            <person name="Tobiishi M."/>
            <person name="Sugiyama Y."/>
            <person name="Inoue S."/>
        </authorList>
    </citation>
    <scope>FUNCTION IN HYALURONIC ACID DEGRADATION</scope>
    <scope>CATALYTIC ACTIVITY</scope>
    <scope>GLYCOSYLATION</scope>
    <scope>SUBCELLULAR LOCATION</scope>
    <scope>PROTEOLYTIC PROCESSING</scope>
    <scope>SIGNAL SEQUENCE CLEAVAGE SITE</scope>
</reference>
<name>CEMIP_HUMAN</name>
<dbReference type="EC" id="3.2.1.35" evidence="11 14"/>
<dbReference type="EMBL" id="AB103330">
    <property type="protein sequence ID" value="BAD02451.1"/>
    <property type="molecule type" value="mRNA"/>
</dbReference>
<dbReference type="EMBL" id="CH471136">
    <property type="protein sequence ID" value="EAW99111.1"/>
    <property type="molecule type" value="Genomic_DNA"/>
</dbReference>
<dbReference type="EMBL" id="BC020256">
    <property type="protein sequence ID" value="AAH20256.1"/>
    <property type="molecule type" value="mRNA"/>
</dbReference>
<dbReference type="EMBL" id="AB033025">
    <property type="protein sequence ID" value="BAA86513.1"/>
    <property type="molecule type" value="mRNA"/>
</dbReference>
<dbReference type="EMBL" id="AL359061">
    <property type="protein sequence ID" value="CAB94391.1"/>
    <property type="molecule type" value="mRNA"/>
</dbReference>
<dbReference type="EMBL" id="AY007811">
    <property type="protein sequence ID" value="AAG41059.1"/>
    <property type="molecule type" value="mRNA"/>
</dbReference>
<dbReference type="CCDS" id="CCDS10315.1">
    <molecule id="Q8WUJ3-1"/>
</dbReference>
<dbReference type="RefSeq" id="NP_001280227.1">
    <molecule id="Q8WUJ3-1"/>
    <property type="nucleotide sequence ID" value="NM_001293298.2"/>
</dbReference>
<dbReference type="RefSeq" id="NP_001280233.1">
    <molecule id="Q8WUJ3-1"/>
    <property type="nucleotide sequence ID" value="NM_001293304.2"/>
</dbReference>
<dbReference type="RefSeq" id="NP_061159.1">
    <molecule id="Q8WUJ3-1"/>
    <property type="nucleotide sequence ID" value="NM_018689.3"/>
</dbReference>
<dbReference type="RefSeq" id="XP_047288856.1">
    <molecule id="Q8WUJ3-1"/>
    <property type="nucleotide sequence ID" value="XM_047432900.1"/>
</dbReference>
<dbReference type="RefSeq" id="XP_054234488.1">
    <molecule id="Q8WUJ3-1"/>
    <property type="nucleotide sequence ID" value="XM_054378513.1"/>
</dbReference>
<dbReference type="SMR" id="Q8WUJ3"/>
<dbReference type="BioGRID" id="121452">
    <property type="interactions" value="95"/>
</dbReference>
<dbReference type="FunCoup" id="Q8WUJ3">
    <property type="interactions" value="405"/>
</dbReference>
<dbReference type="IntAct" id="Q8WUJ3">
    <property type="interactions" value="14"/>
</dbReference>
<dbReference type="MINT" id="Q8WUJ3"/>
<dbReference type="STRING" id="9606.ENSP00000378177"/>
<dbReference type="CarbonylDB" id="Q8WUJ3"/>
<dbReference type="GlyCosmos" id="Q8WUJ3">
    <property type="glycosylation" value="7 sites, No reported glycans"/>
</dbReference>
<dbReference type="GlyGen" id="Q8WUJ3">
    <property type="glycosylation" value="8 sites, 3 N-linked glycans (2 sites), 1 O-linked glycan (1 site)"/>
</dbReference>
<dbReference type="iPTMnet" id="Q8WUJ3"/>
<dbReference type="PhosphoSitePlus" id="Q8WUJ3"/>
<dbReference type="BioMuta" id="CEMIP"/>
<dbReference type="DMDM" id="46396475"/>
<dbReference type="jPOST" id="Q8WUJ3"/>
<dbReference type="MassIVE" id="Q8WUJ3"/>
<dbReference type="PaxDb" id="9606-ENSP00000378177"/>
<dbReference type="PeptideAtlas" id="Q8WUJ3"/>
<dbReference type="ProteomicsDB" id="74690">
    <molecule id="Q8WUJ3-1"/>
</dbReference>
<dbReference type="ProteomicsDB" id="74691">
    <molecule id="Q8WUJ3-2"/>
</dbReference>
<dbReference type="Antibodypedia" id="27890">
    <property type="antibodies" value="248 antibodies from 26 providers"/>
</dbReference>
<dbReference type="DNASU" id="57214"/>
<dbReference type="Ensembl" id="ENST00000220244.7">
    <molecule id="Q8WUJ3-1"/>
    <property type="protein sequence ID" value="ENSP00000220244.3"/>
    <property type="gene ID" value="ENSG00000103888.17"/>
</dbReference>
<dbReference type="Ensembl" id="ENST00000356249.9">
    <molecule id="Q8WUJ3-1"/>
    <property type="protein sequence ID" value="ENSP00000348583.5"/>
    <property type="gene ID" value="ENSG00000103888.17"/>
</dbReference>
<dbReference type="Ensembl" id="ENST00000394685.8">
    <molecule id="Q8WUJ3-1"/>
    <property type="protein sequence ID" value="ENSP00000378177.3"/>
    <property type="gene ID" value="ENSG00000103888.17"/>
</dbReference>
<dbReference type="GeneID" id="57214"/>
<dbReference type="KEGG" id="hsa:57214"/>
<dbReference type="MANE-Select" id="ENST00000394685.8">
    <property type="protein sequence ID" value="ENSP00000378177.3"/>
    <property type="RefSeq nucleotide sequence ID" value="NM_001293298.2"/>
    <property type="RefSeq protein sequence ID" value="NP_001280227.1"/>
</dbReference>
<dbReference type="UCSC" id="uc002bfw.2">
    <molecule id="Q8WUJ3-1"/>
    <property type="organism name" value="human"/>
</dbReference>
<dbReference type="AGR" id="HGNC:29213"/>
<dbReference type="CTD" id="57214"/>
<dbReference type="DisGeNET" id="57214"/>
<dbReference type="GeneCards" id="CEMIP"/>
<dbReference type="HGNC" id="HGNC:29213">
    <property type="gene designation" value="CEMIP"/>
</dbReference>
<dbReference type="HPA" id="ENSG00000103888">
    <property type="expression patterns" value="Tissue enhanced (endometrium)"/>
</dbReference>
<dbReference type="MIM" id="608366">
    <property type="type" value="gene"/>
</dbReference>
<dbReference type="neXtProt" id="NX_Q8WUJ3"/>
<dbReference type="OpenTargets" id="ENSG00000103888"/>
<dbReference type="PharmGKB" id="PA134967531"/>
<dbReference type="VEuPathDB" id="HostDB:ENSG00000103888"/>
<dbReference type="eggNOG" id="ENOG502QT0K">
    <property type="taxonomic scope" value="Eukaryota"/>
</dbReference>
<dbReference type="GeneTree" id="ENSGT00940000153636"/>
<dbReference type="HOGENOM" id="CLU_005606_1_0_1"/>
<dbReference type="InParanoid" id="Q8WUJ3"/>
<dbReference type="OMA" id="YGRADED"/>
<dbReference type="OrthoDB" id="120976at2759"/>
<dbReference type="PAN-GO" id="Q8WUJ3">
    <property type="GO annotations" value="0 GO annotations based on evolutionary models"/>
</dbReference>
<dbReference type="PhylomeDB" id="Q8WUJ3"/>
<dbReference type="TreeFam" id="TF316575"/>
<dbReference type="PathwayCommons" id="Q8WUJ3"/>
<dbReference type="Reactome" id="R-HSA-2142850">
    <property type="pathway name" value="Hyaluronan biosynthesis and export"/>
</dbReference>
<dbReference type="SignaLink" id="Q8WUJ3"/>
<dbReference type="BioGRID-ORCS" id="57214">
    <property type="hits" value="16 hits in 1143 CRISPR screens"/>
</dbReference>
<dbReference type="ChiTaRS" id="CEMIP">
    <property type="organism name" value="human"/>
</dbReference>
<dbReference type="GeneWiki" id="KIAA1199"/>
<dbReference type="GenomeRNAi" id="57214"/>
<dbReference type="Pharos" id="Q8WUJ3">
    <property type="development level" value="Tbio"/>
</dbReference>
<dbReference type="PRO" id="PR:Q8WUJ3"/>
<dbReference type="Proteomes" id="UP000005640">
    <property type="component" value="Chromosome 15"/>
</dbReference>
<dbReference type="RNAct" id="Q8WUJ3">
    <property type="molecule type" value="protein"/>
</dbReference>
<dbReference type="Bgee" id="ENSG00000103888">
    <property type="expression patterns" value="Expressed in choroid plexus epithelium and 132 other cell types or tissues"/>
</dbReference>
<dbReference type="ExpressionAtlas" id="Q8WUJ3">
    <property type="expression patterns" value="baseline and differential"/>
</dbReference>
<dbReference type="GO" id="GO:0045334">
    <property type="term" value="C:clathrin-coated endocytic vesicle"/>
    <property type="evidence" value="ECO:0000314"/>
    <property type="project" value="UniProtKB"/>
</dbReference>
<dbReference type="GO" id="GO:0005905">
    <property type="term" value="C:clathrin-coated pit"/>
    <property type="evidence" value="ECO:0007669"/>
    <property type="project" value="UniProtKB-SubCell"/>
</dbReference>
<dbReference type="GO" id="GO:0030665">
    <property type="term" value="C:clathrin-coated vesicle membrane"/>
    <property type="evidence" value="ECO:0007669"/>
    <property type="project" value="Ensembl"/>
</dbReference>
<dbReference type="GO" id="GO:0005737">
    <property type="term" value="C:cytoplasm"/>
    <property type="evidence" value="ECO:0000314"/>
    <property type="project" value="UniProtKB"/>
</dbReference>
<dbReference type="GO" id="GO:0005783">
    <property type="term" value="C:endoplasmic reticulum"/>
    <property type="evidence" value="ECO:0000314"/>
    <property type="project" value="HPA"/>
</dbReference>
<dbReference type="GO" id="GO:0005576">
    <property type="term" value="C:extracellular region"/>
    <property type="evidence" value="ECO:0000304"/>
    <property type="project" value="Reactome"/>
</dbReference>
<dbReference type="GO" id="GO:0001650">
    <property type="term" value="C:fibrillar center"/>
    <property type="evidence" value="ECO:0000314"/>
    <property type="project" value="HPA"/>
</dbReference>
<dbReference type="GO" id="GO:0031965">
    <property type="term" value="C:nuclear membrane"/>
    <property type="evidence" value="ECO:0000314"/>
    <property type="project" value="HPA"/>
</dbReference>
<dbReference type="GO" id="GO:0005886">
    <property type="term" value="C:plasma membrane"/>
    <property type="evidence" value="ECO:0000314"/>
    <property type="project" value="UniProtKB"/>
</dbReference>
<dbReference type="GO" id="GO:0030246">
    <property type="term" value="F:carbohydrate binding"/>
    <property type="evidence" value="ECO:0007669"/>
    <property type="project" value="UniProtKB-KW"/>
</dbReference>
<dbReference type="GO" id="GO:0032050">
    <property type="term" value="F:clathrin heavy chain binding"/>
    <property type="evidence" value="ECO:0000314"/>
    <property type="project" value="UniProtKB"/>
</dbReference>
<dbReference type="GO" id="GO:0046923">
    <property type="term" value="F:ER retention sequence binding"/>
    <property type="evidence" value="ECO:0000314"/>
    <property type="project" value="UniProtKB"/>
</dbReference>
<dbReference type="GO" id="GO:0005540">
    <property type="term" value="F:hyaluronic acid binding"/>
    <property type="evidence" value="ECO:0000314"/>
    <property type="project" value="UniProtKB"/>
</dbReference>
<dbReference type="GO" id="GO:0004415">
    <property type="term" value="F:hyalurononglucosaminidase activity"/>
    <property type="evidence" value="ECO:0000315"/>
    <property type="project" value="UniProtKB"/>
</dbReference>
<dbReference type="GO" id="GO:0030213">
    <property type="term" value="P:hyaluronan biosynthetic process"/>
    <property type="evidence" value="ECO:0000304"/>
    <property type="project" value="Reactome"/>
</dbReference>
<dbReference type="GO" id="GO:0030214">
    <property type="term" value="P:hyaluronan catabolic process"/>
    <property type="evidence" value="ECO:0000315"/>
    <property type="project" value="UniProtKB"/>
</dbReference>
<dbReference type="GO" id="GO:0030335">
    <property type="term" value="P:positive regulation of cell migration"/>
    <property type="evidence" value="ECO:0000314"/>
    <property type="project" value="UniProtKB"/>
</dbReference>
<dbReference type="GO" id="GO:0010800">
    <property type="term" value="P:positive regulation of peptidyl-threonine phosphorylation"/>
    <property type="evidence" value="ECO:0000314"/>
    <property type="project" value="UniProtKB"/>
</dbReference>
<dbReference type="GO" id="GO:1900020">
    <property type="term" value="P:positive regulation of protein kinase C activity"/>
    <property type="evidence" value="ECO:0000314"/>
    <property type="project" value="UniProtKB"/>
</dbReference>
<dbReference type="GO" id="GO:0090314">
    <property type="term" value="P:positive regulation of protein targeting to membrane"/>
    <property type="evidence" value="ECO:0000314"/>
    <property type="project" value="UniProtKB"/>
</dbReference>
<dbReference type="GO" id="GO:0051281">
    <property type="term" value="P:positive regulation of release of sequestered calcium ion into cytosol"/>
    <property type="evidence" value="ECO:0000314"/>
    <property type="project" value="UniProtKB"/>
</dbReference>
<dbReference type="GO" id="GO:0007605">
    <property type="term" value="P:sensory perception of sound"/>
    <property type="evidence" value="ECO:0000315"/>
    <property type="project" value="UniProtKB"/>
</dbReference>
<dbReference type="CDD" id="cd13941">
    <property type="entry name" value="PANDER_like_KIAA1199"/>
    <property type="match status" value="1"/>
</dbReference>
<dbReference type="CDD" id="cd13938">
    <property type="entry name" value="PANDER_like_TMEM2"/>
    <property type="match status" value="1"/>
</dbReference>
<dbReference type="InterPro" id="IPR052252">
    <property type="entry name" value="CEMIP/CEMIP2"/>
</dbReference>
<dbReference type="InterPro" id="IPR055401">
    <property type="entry name" value="CEMIP_beta-hel_dom"/>
</dbReference>
<dbReference type="InterPro" id="IPR055400">
    <property type="entry name" value="CEMIP_X"/>
</dbReference>
<dbReference type="InterPro" id="IPR019316">
    <property type="entry name" value="G8_domain"/>
</dbReference>
<dbReference type="InterPro" id="IPR039477">
    <property type="entry name" value="ILEI/PANDER_dom"/>
</dbReference>
<dbReference type="InterPro" id="IPR011050">
    <property type="entry name" value="Pectin_lyase_fold/virulence"/>
</dbReference>
<dbReference type="InterPro" id="IPR039473">
    <property type="entry name" value="TMEM2_PANDER-like"/>
</dbReference>
<dbReference type="InterPro" id="IPR025155">
    <property type="entry name" value="WxxW_domain"/>
</dbReference>
<dbReference type="PANTHER" id="PTHR15535:SF15">
    <property type="entry name" value="CELL MIGRATION-INDUCING AND HYALURONAN-BINDING PROTEIN"/>
    <property type="match status" value="1"/>
</dbReference>
<dbReference type="PANTHER" id="PTHR15535">
    <property type="entry name" value="TRANSMEMBRANE PROTEIN 2-RELATED"/>
    <property type="match status" value="1"/>
</dbReference>
<dbReference type="Pfam" id="PF24606">
    <property type="entry name" value="CEMIP_beta-hel"/>
    <property type="match status" value="1"/>
</dbReference>
<dbReference type="Pfam" id="PF24605">
    <property type="entry name" value="CEMIP_X"/>
    <property type="match status" value="1"/>
</dbReference>
<dbReference type="Pfam" id="PF10162">
    <property type="entry name" value="G8"/>
    <property type="match status" value="1"/>
</dbReference>
<dbReference type="Pfam" id="PF15711">
    <property type="entry name" value="ILEI"/>
    <property type="match status" value="2"/>
</dbReference>
<dbReference type="Pfam" id="PF13330">
    <property type="entry name" value="Mucin2_WxxW"/>
    <property type="match status" value="2"/>
</dbReference>
<dbReference type="SMART" id="SM01225">
    <property type="entry name" value="G8"/>
    <property type="match status" value="1"/>
</dbReference>
<dbReference type="SUPFAM" id="SSF51126">
    <property type="entry name" value="Pectin lyase-like"/>
    <property type="match status" value="1"/>
</dbReference>
<dbReference type="PROSITE" id="PS51484">
    <property type="entry name" value="G8"/>
    <property type="match status" value="1"/>
</dbReference>
<dbReference type="PROSITE" id="PS52031">
    <property type="entry name" value="GG_LECTIN"/>
    <property type="match status" value="2"/>
</dbReference>
<sequence length="1361" mass="152998">MGAAGRQDFLFKAMLTISWLTLTCFPGATSTVAAGCPDQSPELQPWNPGHDQDHHVHIGQGKTLLLTSSATVYSIHISEGGKLVIKDHDEPIVLRTRHILIDNGGELHAGSALCPFQGNFTIILYGRADEGIQPDPYYGLKYIGVGKGGALELHGQKKLSWTFLNKTLHPGGMAEGGYFFERSWGHRGVIVHVIDPKSGTVIHSDRFDTYRSKKESERLVQYLNAVPDGRILSVAVNDEGSRNLDDMARKAMTKLGSKHFLHLGFRHPWSFLTVKGNPSSSVEDHIEYHGHRGSAAARVFKLFQTEHGEYFNVSLSSEWVQDVEWTEWFDHDKVSQTKGGEKISDLWKAHPGKICNRPIDIQATTMDGVNLSTEVVYKKGQDYRFACYDRGRACRSYRVRFLCGKPVRPKLTVTIDTNVNSTILNLEDNVQSWKPGDTLVIASTDYSMYQAEEFQVLPCRSCAPNQVKVAGKPMYLHIGEEIDGVDMRAEVGLLSRNIIVMGEMEDKCYPYRNHICNFFDFDTFGGHIKFALGFKAAHLEGTELKHMGQQLVGQYPIHFHLAGDVDERGGYDPPTYIRDLSIHHTFSRCVTVHGSNGLLIKDVVGYNSLGHCFFTEDGPEERNTFDHCLGLLVKSGTLLPSDRDSKMCKMITEDSYPGYIPKPRQDCNAVSTFWMANPNNNLINCAAAGSEETGFWFIFHHVPTGPSVGMYSPGYSEHIPLGKFYNNRAHSNYRAGMIIDNGVKTTEASAKDKRPFLSIISARYSPHQDADPLKPREPAIIRHFIAYKNQDHGAWLRGGDVWLDSCRFADNGIGLTLASGGTFPYDDGSKQEIKNSLFVGESGNVGTEMMDNRIWGPGGLDHSGRTLPIGQNFPIRGIQLYDGPINIQNCTFRKFVALEGRHTSALAFRLNNAWQSCPHNNVTGIAFEDVPITSRVFFGEPGPWFNQLDMDGDKTSVFHDVDGSVSEYPGSYLTKNDNWLVRHPDCINVPDWRGAICSGCYAQMYIQAYKTSNLRMKIIKNDFPSHPLYLEGALTRSTHYQQYQPVVTLQKGYTIHWDQTAPAELAIWLINFNKGDWIRVGLCYPRGTTFSILSDVHNRLLKQTSKTGVFVRTLQMDKVEQSYPGRSHYYWDEDSGLLFLKLKAQNEREKFAFCSMKGCERIKIKALIPKNAGVSDCTATAYPKFTERAVVDVPMPKKLFGSQLKTKDHFLEVKMESSKQHFFHLWNDFAYIEVDGKKYPSSEDGIQVVVIDGNQGRVVSHTSFRNSILQGIPWQLFNYVATIPDNSIVLMASKGRYVSRGPWTRVLEKLGADRGLKLKEQMAFVGFKGSFRPIWVTLDTEDHKAKIFQVVPIPVVKKKKL</sequence>
<feature type="signal peptide" evidence="14">
    <location>
        <begin position="1"/>
        <end position="30"/>
    </location>
</feature>
<feature type="chain" id="PRO_0000021538" description="Cell migration-inducing and hyaluronan-binding protein">
    <location>
        <begin position="31"/>
        <end position="1361"/>
    </location>
</feature>
<feature type="domain" description="G8" evidence="2">
    <location>
        <begin position="44"/>
        <end position="166"/>
    </location>
</feature>
<feature type="domain" description="GG-type lectin 1" evidence="3">
    <location>
        <begin position="176"/>
        <end position="317"/>
    </location>
</feature>
<feature type="repeat" description="PbH1 1">
    <location>
        <begin position="572"/>
        <end position="594"/>
    </location>
</feature>
<feature type="repeat" description="PbH1 2">
    <location>
        <begin position="595"/>
        <end position="617"/>
    </location>
</feature>
<feature type="repeat" description="PbH1 3">
    <location>
        <begin position="719"/>
        <end position="741"/>
    </location>
</feature>
<feature type="repeat" description="PbH1 4">
    <location>
        <begin position="798"/>
        <end position="819"/>
    </location>
</feature>
<feature type="domain" description="GG-type lectin 2" evidence="3">
    <location>
        <begin position="1227"/>
        <end position="1361"/>
    </location>
</feature>
<feature type="region of interest" description="Necessary for its endoplasmic reticulum (ER) retention and interaction with HSPA5" evidence="13">
    <location>
        <begin position="295"/>
        <end position="591"/>
    </location>
</feature>
<feature type="glycosylation site" description="N-linked (GlcNAc...) asparagine" evidence="1">
    <location>
        <position position="119"/>
    </location>
</feature>
<feature type="glycosylation site" description="N-linked (GlcNAc...) asparagine" evidence="1">
    <location>
        <position position="165"/>
    </location>
</feature>
<feature type="glycosylation site" description="N-linked (GlcNAc...) asparagine" evidence="1">
    <location>
        <position position="312"/>
    </location>
</feature>
<feature type="glycosylation site" description="N-linked (GlcNAc...) asparagine" evidence="1">
    <location>
        <position position="370"/>
    </location>
</feature>
<feature type="glycosylation site" description="N-linked (GlcNAc...) asparagine" evidence="1">
    <location>
        <position position="420"/>
    </location>
</feature>
<feature type="glycosylation site" description="N-linked (GlcNAc...) asparagine" evidence="1">
    <location>
        <position position="889"/>
    </location>
</feature>
<feature type="glycosylation site" description="N-linked (GlcNAc...) asparagine" evidence="1">
    <location>
        <position position="921"/>
    </location>
</feature>
<feature type="splice variant" id="VSP_009814" description="In isoform 2." evidence="15">
    <original>NWLVRHPDCINVPDW</original>
    <variation>KWHSLASKAASGPSG</variation>
    <location>
        <begin position="978"/>
        <end position="992"/>
    </location>
</feature>
<feature type="splice variant" id="VSP_009815" description="In isoform 2." evidence="15">
    <location>
        <begin position="993"/>
        <end position="1361"/>
    </location>
</feature>
<feature type="sequence variant" id="VAR_018165" description="In a family with non-syndromic hearing loss; reduces hyaluronic acid degradation activity; dbSNP:rs368854657." evidence="6 11">
    <original>R</original>
    <variation>C</variation>
    <location>
        <position position="187"/>
    </location>
</feature>
<feature type="sequence variant" id="VAR_018166" description="In two unrelated families with non-syndromic hearing loss; reduces hyaluronic acid (HA) degradation activity; dbSNP:rs144446375." evidence="6 11">
    <original>R</original>
    <variation>H</variation>
    <location>
        <position position="187"/>
    </location>
</feature>
<feature type="sequence variant" id="VAR_018167" description="Does not inhibit hyaluronic acid degradation activity; dbSNP:rs12441101." evidence="6 11">
    <original>H</original>
    <variation>R</variation>
    <location>
        <position position="783"/>
    </location>
</feature>
<feature type="sequence variant" id="VAR_018168" description="In a sporadic case of non-syndromic hearing loss; dbSNP:rs996035812." evidence="6">
    <original>H</original>
    <variation>Y</variation>
    <location>
        <position position="783"/>
    </location>
</feature>
<feature type="sequence variant" id="VAR_018169" description="Does not inhibit hyaluronic acid degradation activity; dbSNP:rs751807711." evidence="6 11">
    <original>V</original>
    <variation>I</variation>
    <location>
        <position position="1109"/>
    </location>
</feature>
<feature type="sequence variant" id="VAR_018170" description="In dbSNP:rs16972583." evidence="6">
    <original>P</original>
    <variation>A</variation>
    <location>
        <position position="1169"/>
    </location>
</feature>
<feature type="sequence conflict" description="In Ref. 6; CAB94391." evidence="17" ref="6">
    <original>HFHLAGD</original>
    <variation>TRPPTRP</variation>
    <location>
        <begin position="558"/>
        <end position="564"/>
    </location>
</feature>
<feature type="sequence conflict" description="In Ref. 7; AAG41059." evidence="17" ref="7">
    <original>H</original>
    <variation>T</variation>
    <location>
        <position position="862"/>
    </location>
</feature>
<protein>
    <recommendedName>
        <fullName>Cell migration-inducing and hyaluronan-binding protein</fullName>
        <ecNumber evidence="11 14">3.2.1.35</ecNumber>
    </recommendedName>
    <alternativeName>
        <fullName evidence="16">Hyaluronan binding protein involved in hyaluronan depolymerization</fullName>
    </alternativeName>
</protein>
<accession>Q8WUJ3</accession>
<accession>Q6L9J5</accession>
<accession>Q9H1K5</accession>
<accession>Q9NPN9</accession>
<accession>Q9ULM1</accession>
<proteinExistence type="evidence at protein level"/>
<gene>
    <name evidence="18" type="primary">CEMIP</name>
    <name evidence="16" type="synonym">HYBID</name>
    <name type="synonym">KIAA1199</name>
</gene>
<evidence type="ECO:0000255" key="1"/>
<evidence type="ECO:0000255" key="2">
    <source>
        <dbReference type="PROSITE-ProRule" id="PRU00817"/>
    </source>
</evidence>
<evidence type="ECO:0000255" key="3">
    <source>
        <dbReference type="PROSITE-ProRule" id="PRU01375"/>
    </source>
</evidence>
<evidence type="ECO:0000269" key="4">
    <source>
    </source>
</evidence>
<evidence type="ECO:0000269" key="5">
    <source>
    </source>
</evidence>
<evidence type="ECO:0000269" key="6">
    <source>
    </source>
</evidence>
<evidence type="ECO:0000269" key="7">
    <source>
    </source>
</evidence>
<evidence type="ECO:0000269" key="8">
    <source>
    </source>
</evidence>
<evidence type="ECO:0000269" key="9">
    <source>
    </source>
</evidence>
<evidence type="ECO:0000269" key="10">
    <source>
    </source>
</evidence>
<evidence type="ECO:0000269" key="11">
    <source>
    </source>
</evidence>
<evidence type="ECO:0000269" key="12">
    <source>
    </source>
</evidence>
<evidence type="ECO:0000269" key="13">
    <source>
    </source>
</evidence>
<evidence type="ECO:0000269" key="14">
    <source>
    </source>
</evidence>
<evidence type="ECO:0000303" key="15">
    <source>
    </source>
</evidence>
<evidence type="ECO:0000303" key="16">
    <source>
    </source>
</evidence>
<evidence type="ECO:0000305" key="17"/>
<evidence type="ECO:0000312" key="18">
    <source>
        <dbReference type="HGNC" id="HGNC:29213"/>
    </source>
</evidence>
<organism>
    <name type="scientific">Homo sapiens</name>
    <name type="common">Human</name>
    <dbReference type="NCBI Taxonomy" id="9606"/>
    <lineage>
        <taxon>Eukaryota</taxon>
        <taxon>Metazoa</taxon>
        <taxon>Chordata</taxon>
        <taxon>Craniata</taxon>
        <taxon>Vertebrata</taxon>
        <taxon>Euteleostomi</taxon>
        <taxon>Mammalia</taxon>
        <taxon>Eutheria</taxon>
        <taxon>Euarchontoglires</taxon>
        <taxon>Primates</taxon>
        <taxon>Haplorrhini</taxon>
        <taxon>Catarrhini</taxon>
        <taxon>Hominidae</taxon>
        <taxon>Homo</taxon>
    </lineage>
</organism>
<keyword id="KW-0025">Alternative splicing</keyword>
<keyword id="KW-1003">Cell membrane</keyword>
<keyword id="KW-0168">Coated pit</keyword>
<keyword id="KW-0963">Cytoplasm</keyword>
<keyword id="KW-0256">Endoplasmic reticulum</keyword>
<keyword id="KW-0325">Glycoprotein</keyword>
<keyword id="KW-0326">Glycosidase</keyword>
<keyword id="KW-0373">Hyaluronic acid</keyword>
<keyword id="KW-0378">Hydrolase</keyword>
<keyword id="KW-0430">Lectin</keyword>
<keyword id="KW-0472">Membrane</keyword>
<keyword id="KW-0539">Nucleus</keyword>
<keyword id="KW-1267">Proteomics identification</keyword>
<keyword id="KW-1185">Reference proteome</keyword>
<keyword id="KW-0677">Repeat</keyword>
<keyword id="KW-0964">Secreted</keyword>
<keyword id="KW-0732">Signal</keyword>
<comment type="function">
    <text evidence="11 13 14">Mediates depolymerization of hyaluronic acid (HA) via the cell membrane-associated clathrin-coated pit endocytic pathway. Binds to hyaluronic acid. Hydrolyzes high molecular weight hyaluronic acid to produce an intermediate-sized product, a process that may occur through rapid vesicle endocytosis and recycling without intracytoplasmic accumulation or digestion in lysosomes. Involved in hyaluronan catabolism in the dermis of the skin and arthritic synovium. Positively regulates epithelial-mesenchymal transition (EMT), and hence tumor cell growth, invasion and cancer dissemination. In collaboration with HSPA5/BIP, promotes cancer cell migration in a calcium and PKC-dependent manner. May be involved in hearing.</text>
</comment>
<comment type="catalytic activity">
    <reaction evidence="11 14">
        <text>Random hydrolysis of (1-&gt;4)-linkages between N-acetyl-beta-D-glucosamine and D-glucuronate residues in hyaluronate.</text>
        <dbReference type="EC" id="3.2.1.35"/>
    </reaction>
</comment>
<comment type="activity regulation">
    <text evidence="11">Activity is up-regulated by histamine.</text>
</comment>
<comment type="subunit">
    <text evidence="11 12 13">Interacts with EPHA2 and ITPR3. Interacts with HSPA5/BIP; the interaction induces calcium leakage from the endoplasmic reticulum and cell migration. Interacts with clathrin heavy chain/CLTC.</text>
</comment>
<comment type="interaction">
    <interactant intactId="EBI-310606">
        <id>Q8WUJ3</id>
    </interactant>
    <interactant intactId="EBI-356273">
        <id>P53621</id>
        <label>COPA</label>
    </interactant>
    <organismsDiffer>false</organismsDiffer>
    <experiments>2</experiments>
</comment>
<comment type="interaction">
    <interactant intactId="EBI-310606">
        <id>Q8WUJ3</id>
    </interactant>
    <interactant intactId="EBI-740559">
        <id>Q93100</id>
        <label>PHKB</label>
    </interactant>
    <organismsDiffer>false</organismsDiffer>
    <experiments>2</experiments>
</comment>
<comment type="subcellular location">
    <subcellularLocation>
        <location>Nucleus</location>
    </subcellularLocation>
    <subcellularLocation>
        <location>Cytoplasm</location>
    </subcellularLocation>
    <subcellularLocation>
        <location>Endoplasmic reticulum</location>
    </subcellularLocation>
    <subcellularLocation>
        <location>Cell membrane</location>
    </subcellularLocation>
    <subcellularLocation>
        <location>Membrane</location>
        <location>Clathrin-coated pit</location>
    </subcellularLocation>
    <subcellularLocation>
        <location>Secreted</location>
    </subcellularLocation>
    <text>Retained in the endoplasmic reticulum (ER) in a HSPA5/BIP-dependent manner. Colocalized with clathrin heavy chain/CLTC in clathrin-coated vesicles. Strongly detected in the cytoplasm of breast carcinoma cells, whereas poorly detected in adjacent normal epithelial cells, stromal cells, or benign breast tissues. Localized in the nucleus and cytoplasm of colon adenocarcinomas.</text>
</comment>
<comment type="alternative products">
    <event type="alternative splicing"/>
    <isoform>
        <id>Q8WUJ3-1</id>
        <name>1</name>
        <sequence type="displayed"/>
    </isoform>
    <isoform>
        <id>Q8WUJ3-2</id>
        <name>2</name>
        <sequence type="described" ref="VSP_009814 VSP_009815"/>
    </isoform>
</comment>
<comment type="tissue specificity">
    <text evidence="4 5 7 8 9 10 12 13">Expressed in dermal and in synovial fibroblasts. Strongly expressed in gastric cancers compared with the paired normal tissues. Strongly expressed in both ductal carcinoma and invasive breast cancer cells compared with benign epithelial cells (at protein level). Strongly expressed in brain, placenta, prostate, breast, lung and testis. Expressed in fibroblasts, epithelial cells and cancer cells. In ear, it is specifically expressed in inner ear. Expressed in cochlea and vestibule tissues. Strongly expressed in gastric cancers compared with the paired normal tissues. Strongly expressed in colon adenocarcinomas compared with normal colonic mucosas. Strongly expressed in breast cancer as compared to normal breast tissue.</text>
</comment>
<comment type="induction">
    <text evidence="10 11">Up-regulated by histamine. Up-regulated by the adapter protein complex 1 (AP-1) and NF-kappaB/RELA. Down-regulated by transforming growth factor TGFB1.</text>
</comment>
<comment type="domain">
    <text>The signal sequence is essential in mediating its proper translocation, hyaluronic acid (HA) degradation activity and secretion.</text>
</comment>
<comment type="PTM">
    <text evidence="12 14">N-glycosylated; glycosylation is not necessary for HA-binding.</text>
</comment>
<comment type="similarity">
    <text evidence="17">Belongs to the CEMIP family.</text>
</comment>